<evidence type="ECO:0000255" key="1">
    <source>
        <dbReference type="HAMAP-Rule" id="MF_01068"/>
    </source>
</evidence>
<accession>B5R535</accession>
<protein>
    <recommendedName>
        <fullName evidence="1">Glucans biosynthesis protein D</fullName>
    </recommendedName>
</protein>
<comment type="function">
    <text evidence="1">Probably involved in the control of the structural glucose backbone of osmoregulated periplasmic glucans (OPGs).</text>
</comment>
<comment type="pathway">
    <text evidence="1">Glycan metabolism; osmoregulated periplasmic glucan (OPG) biosynthesis.</text>
</comment>
<comment type="subcellular location">
    <subcellularLocation>
        <location evidence="1">Periplasm</location>
    </subcellularLocation>
</comment>
<comment type="PTM">
    <text>Predicted to be exported by the Tat system. The position of the signal peptide cleavage has not been experimentally proven.</text>
</comment>
<comment type="similarity">
    <text evidence="1">Belongs to the OpgD/OpgG family.</text>
</comment>
<sequence length="551" mass="62199">MNRRRFIKGSMAMAAVCGSSGIASLFSQAAFAAESDIADGKIVRFDFAGLQSMAQALAKKPWGGAPGPLPDTLANLTPQAYNSIQYDAAHSLWNGVANRQLDIQFFHVGMGFRRRVRMFSVDTTTHLAREIHFRPELFKYNDAGVDTTQLEGQSDLGFAGFRVFKAPELARRDVVSFLGASYFRAVDDTYQYGLSARGLAIDTYTDGQEEFPDFTAFWFDTAKPGDTTFTVYALLDSASVTGAYKFVIHCEKSQVIMDVENHLYARKDIKQLGIAPMTSMFSCGNNERRVCDTIHPQIHDSDRLAMWRGNGEWICRPLNNPQKLQFNAYMDDNPKGFGLLQLDRDFSHYQDVMGWYNKRPSLWVEPRSKWGKGAVSLMEIPTTGETLDNVVCFWQPEKAIKAGDTLAFNYRLYWSAQPPVQSPLARVMATRTGMGGFPEGWAPGEHYPDKWARRFAIDFVGGDLKAAAPKGIEPVITLSSGEAKQIEILYVEPFDGYRIQFDWYPTSDSTAPVDMRMFLRCQGEAISETWLYQYFPPAPDKRRYVDDRIMR</sequence>
<keyword id="KW-0574">Periplasm</keyword>
<keyword id="KW-0732">Signal</keyword>
<organism>
    <name type="scientific">Salmonella enteritidis PT4 (strain P125109)</name>
    <dbReference type="NCBI Taxonomy" id="550537"/>
    <lineage>
        <taxon>Bacteria</taxon>
        <taxon>Pseudomonadati</taxon>
        <taxon>Pseudomonadota</taxon>
        <taxon>Gammaproteobacteria</taxon>
        <taxon>Enterobacterales</taxon>
        <taxon>Enterobacteriaceae</taxon>
        <taxon>Salmonella</taxon>
    </lineage>
</organism>
<reference key="1">
    <citation type="journal article" date="2008" name="Genome Res.">
        <title>Comparative genome analysis of Salmonella enteritidis PT4 and Salmonella gallinarum 287/91 provides insights into evolutionary and host adaptation pathways.</title>
        <authorList>
            <person name="Thomson N.R."/>
            <person name="Clayton D.J."/>
            <person name="Windhorst D."/>
            <person name="Vernikos G."/>
            <person name="Davidson S."/>
            <person name="Churcher C."/>
            <person name="Quail M.A."/>
            <person name="Stevens M."/>
            <person name="Jones M.A."/>
            <person name="Watson M."/>
            <person name="Barron A."/>
            <person name="Layton A."/>
            <person name="Pickard D."/>
            <person name="Kingsley R.A."/>
            <person name="Bignell A."/>
            <person name="Clark L."/>
            <person name="Harris B."/>
            <person name="Ormond D."/>
            <person name="Abdellah Z."/>
            <person name="Brooks K."/>
            <person name="Cherevach I."/>
            <person name="Chillingworth T."/>
            <person name="Woodward J."/>
            <person name="Norberczak H."/>
            <person name="Lord A."/>
            <person name="Arrowsmith C."/>
            <person name="Jagels K."/>
            <person name="Moule S."/>
            <person name="Mungall K."/>
            <person name="Saunders M."/>
            <person name="Whitehead S."/>
            <person name="Chabalgoity J.A."/>
            <person name="Maskell D."/>
            <person name="Humphreys T."/>
            <person name="Roberts M."/>
            <person name="Barrow P.A."/>
            <person name="Dougan G."/>
            <person name="Parkhill J."/>
        </authorList>
    </citation>
    <scope>NUCLEOTIDE SEQUENCE [LARGE SCALE GENOMIC DNA]</scope>
    <source>
        <strain>P125109</strain>
    </source>
</reference>
<feature type="signal peptide" description="Tat-type signal" evidence="1">
    <location>
        <begin position="1"/>
        <end position="32"/>
    </location>
</feature>
<feature type="chain" id="PRO_5000397919" description="Glucans biosynthesis protein D">
    <location>
        <begin position="33"/>
        <end position="551"/>
    </location>
</feature>
<dbReference type="EMBL" id="AM933172">
    <property type="protein sequence ID" value="CAR33009.1"/>
    <property type="molecule type" value="Genomic_DNA"/>
</dbReference>
<dbReference type="RefSeq" id="WP_001081947.1">
    <property type="nucleotide sequence ID" value="NC_011294.1"/>
</dbReference>
<dbReference type="SMR" id="B5R535"/>
<dbReference type="KEGG" id="set:SEN1430"/>
<dbReference type="HOGENOM" id="CLU_023403_2_0_6"/>
<dbReference type="UniPathway" id="UPA00637"/>
<dbReference type="Proteomes" id="UP000000613">
    <property type="component" value="Chromosome"/>
</dbReference>
<dbReference type="GO" id="GO:0030288">
    <property type="term" value="C:outer membrane-bounded periplasmic space"/>
    <property type="evidence" value="ECO:0007669"/>
    <property type="project" value="TreeGrafter"/>
</dbReference>
<dbReference type="GO" id="GO:0030246">
    <property type="term" value="F:carbohydrate binding"/>
    <property type="evidence" value="ECO:0007669"/>
    <property type="project" value="InterPro"/>
</dbReference>
<dbReference type="GO" id="GO:0003824">
    <property type="term" value="F:catalytic activity"/>
    <property type="evidence" value="ECO:0007669"/>
    <property type="project" value="InterPro"/>
</dbReference>
<dbReference type="GO" id="GO:0051274">
    <property type="term" value="P:beta-glucan biosynthetic process"/>
    <property type="evidence" value="ECO:0007669"/>
    <property type="project" value="TreeGrafter"/>
</dbReference>
<dbReference type="FunFam" id="2.60.40.10:FF:000379">
    <property type="entry name" value="Glucans biosynthesis protein D"/>
    <property type="match status" value="1"/>
</dbReference>
<dbReference type="FunFam" id="2.70.98.10:FF:000004">
    <property type="entry name" value="Glucans biosynthesis protein D"/>
    <property type="match status" value="1"/>
</dbReference>
<dbReference type="Gene3D" id="2.70.98.10">
    <property type="match status" value="1"/>
</dbReference>
<dbReference type="Gene3D" id="2.60.40.10">
    <property type="entry name" value="Immunoglobulins"/>
    <property type="match status" value="1"/>
</dbReference>
<dbReference type="HAMAP" id="MF_01068">
    <property type="entry name" value="MdoD_OpgD"/>
    <property type="match status" value="1"/>
</dbReference>
<dbReference type="InterPro" id="IPR011013">
    <property type="entry name" value="Gal_mutarotase_sf_dom"/>
</dbReference>
<dbReference type="InterPro" id="IPR014718">
    <property type="entry name" value="GH-type_carb-bd"/>
</dbReference>
<dbReference type="InterPro" id="IPR023724">
    <property type="entry name" value="Glucan_biosyn_MdoD"/>
</dbReference>
<dbReference type="InterPro" id="IPR014438">
    <property type="entry name" value="Glucan_biosyn_MdoG/MdoD"/>
</dbReference>
<dbReference type="InterPro" id="IPR007444">
    <property type="entry name" value="Glucan_biosyn_MdoG_C"/>
</dbReference>
<dbReference type="InterPro" id="IPR013783">
    <property type="entry name" value="Ig-like_fold"/>
</dbReference>
<dbReference type="InterPro" id="IPR014756">
    <property type="entry name" value="Ig_E-set"/>
</dbReference>
<dbReference type="InterPro" id="IPR006311">
    <property type="entry name" value="TAT_signal"/>
</dbReference>
<dbReference type="InterPro" id="IPR019546">
    <property type="entry name" value="TAT_signal_bac_arc"/>
</dbReference>
<dbReference type="NCBIfam" id="TIGR01409">
    <property type="entry name" value="TAT_signal_seq"/>
    <property type="match status" value="1"/>
</dbReference>
<dbReference type="PANTHER" id="PTHR30504">
    <property type="entry name" value="GLUCANS BIOSYNTHESIS PROTEIN"/>
    <property type="match status" value="1"/>
</dbReference>
<dbReference type="PANTHER" id="PTHR30504:SF3">
    <property type="entry name" value="GLUCANS BIOSYNTHESIS PROTEIN D"/>
    <property type="match status" value="1"/>
</dbReference>
<dbReference type="Pfam" id="PF04349">
    <property type="entry name" value="MdoG"/>
    <property type="match status" value="1"/>
</dbReference>
<dbReference type="PIRSF" id="PIRSF006281">
    <property type="entry name" value="MdoG"/>
    <property type="match status" value="1"/>
</dbReference>
<dbReference type="SUPFAM" id="SSF81296">
    <property type="entry name" value="E set domains"/>
    <property type="match status" value="1"/>
</dbReference>
<dbReference type="SUPFAM" id="SSF74650">
    <property type="entry name" value="Galactose mutarotase-like"/>
    <property type="match status" value="1"/>
</dbReference>
<dbReference type="PROSITE" id="PS51318">
    <property type="entry name" value="TAT"/>
    <property type="match status" value="1"/>
</dbReference>
<gene>
    <name evidence="1" type="primary">mdoD</name>
    <name evidence="1" type="synonym">opgD</name>
    <name type="ordered locus">SEN1430</name>
</gene>
<proteinExistence type="inferred from homology"/>
<name>OPGD_SALEP</name>